<reference key="1">
    <citation type="journal article" date="1995" name="Science">
        <title>Whole-genome random sequencing and assembly of Haemophilus influenzae Rd.</title>
        <authorList>
            <person name="Fleischmann R.D."/>
            <person name="Adams M.D."/>
            <person name="White O."/>
            <person name="Clayton R.A."/>
            <person name="Kirkness E.F."/>
            <person name="Kerlavage A.R."/>
            <person name="Bult C.J."/>
            <person name="Tomb J.-F."/>
            <person name="Dougherty B.A."/>
            <person name="Merrick J.M."/>
            <person name="McKenney K."/>
            <person name="Sutton G.G."/>
            <person name="FitzHugh W."/>
            <person name="Fields C.A."/>
            <person name="Gocayne J.D."/>
            <person name="Scott J.D."/>
            <person name="Shirley R."/>
            <person name="Liu L.-I."/>
            <person name="Glodek A."/>
            <person name="Kelley J.M."/>
            <person name="Weidman J.F."/>
            <person name="Phillips C.A."/>
            <person name="Spriggs T."/>
            <person name="Hedblom E."/>
            <person name="Cotton M.D."/>
            <person name="Utterback T.R."/>
            <person name="Hanna M.C."/>
            <person name="Nguyen D.T."/>
            <person name="Saudek D.M."/>
            <person name="Brandon R.C."/>
            <person name="Fine L.D."/>
            <person name="Fritchman J.L."/>
            <person name="Fuhrmann J.L."/>
            <person name="Geoghagen N.S.M."/>
            <person name="Gnehm C.L."/>
            <person name="McDonald L.A."/>
            <person name="Small K.V."/>
            <person name="Fraser C.M."/>
            <person name="Smith H.O."/>
            <person name="Venter J.C."/>
        </authorList>
    </citation>
    <scope>NUCLEOTIDE SEQUENCE [LARGE SCALE GENOMIC DNA]</scope>
    <source>
        <strain>ATCC 51907 / DSM 11121 / KW20 / Rd</strain>
    </source>
</reference>
<name>Y1446_HAEIN</name>
<evidence type="ECO:0000255" key="1">
    <source>
        <dbReference type="HAMAP-Rule" id="MF_01866"/>
    </source>
</evidence>
<evidence type="ECO:0000305" key="2"/>
<feature type="chain" id="PRO_0000168857" description="YcgL domain-containing protein HI_1446">
    <location>
        <begin position="1"/>
        <end position="88"/>
    </location>
</feature>
<feature type="domain" description="YcgL" evidence="1">
    <location>
        <begin position="1"/>
        <end position="85"/>
    </location>
</feature>
<protein>
    <recommendedName>
        <fullName evidence="1">YcgL domain-containing protein HI_1446</fullName>
    </recommendedName>
</protein>
<comment type="sequence caution" evidence="2">
    <conflict type="erroneous initiation">
        <sequence resource="EMBL-CDS" id="AAC23096"/>
    </conflict>
</comment>
<keyword id="KW-1185">Reference proteome</keyword>
<sequence length="88" mass="10086">MLCAIYKSKKKLGSYLYVANREDFSSVPSVLLEHFGKPELVMMFNLLGRKALHNVDCNEVLETIKRQGFYLQIAKQDDGLFNSLSEIK</sequence>
<organism>
    <name type="scientific">Haemophilus influenzae (strain ATCC 51907 / DSM 11121 / KW20 / Rd)</name>
    <dbReference type="NCBI Taxonomy" id="71421"/>
    <lineage>
        <taxon>Bacteria</taxon>
        <taxon>Pseudomonadati</taxon>
        <taxon>Pseudomonadota</taxon>
        <taxon>Gammaproteobacteria</taxon>
        <taxon>Pasteurellales</taxon>
        <taxon>Pasteurellaceae</taxon>
        <taxon>Haemophilus</taxon>
    </lineage>
</organism>
<gene>
    <name type="ordered locus">HI_1446</name>
</gene>
<dbReference type="EMBL" id="L42023">
    <property type="protein sequence ID" value="AAC23096.1"/>
    <property type="status" value="ALT_INIT"/>
    <property type="molecule type" value="Genomic_DNA"/>
</dbReference>
<dbReference type="PIR" id="A64030">
    <property type="entry name" value="A64030"/>
</dbReference>
<dbReference type="RefSeq" id="NP_439598.1">
    <property type="nucleotide sequence ID" value="NC_000907.1"/>
</dbReference>
<dbReference type="SMR" id="P44198"/>
<dbReference type="STRING" id="71421.HI_1446"/>
<dbReference type="EnsemblBacteria" id="AAC23096">
    <property type="protein sequence ID" value="AAC23096"/>
    <property type="gene ID" value="HI_1446"/>
</dbReference>
<dbReference type="KEGG" id="hin:HI_1446"/>
<dbReference type="PATRIC" id="fig|71421.8.peg.1508"/>
<dbReference type="eggNOG" id="COG3100">
    <property type="taxonomic scope" value="Bacteria"/>
</dbReference>
<dbReference type="HOGENOM" id="CLU_155118_1_0_6"/>
<dbReference type="OrthoDB" id="7062382at2"/>
<dbReference type="Proteomes" id="UP000000579">
    <property type="component" value="Chromosome"/>
</dbReference>
<dbReference type="Gene3D" id="3.10.510.20">
    <property type="entry name" value="YcgL domain"/>
    <property type="match status" value="1"/>
</dbReference>
<dbReference type="HAMAP" id="MF_01866">
    <property type="entry name" value="UPF0745"/>
    <property type="match status" value="1"/>
</dbReference>
<dbReference type="InterPro" id="IPR038068">
    <property type="entry name" value="YcgL-like_sf"/>
</dbReference>
<dbReference type="InterPro" id="IPR027354">
    <property type="entry name" value="YcgL_dom"/>
</dbReference>
<dbReference type="PANTHER" id="PTHR38109">
    <property type="entry name" value="PROTEIN YCGL"/>
    <property type="match status" value="1"/>
</dbReference>
<dbReference type="PANTHER" id="PTHR38109:SF1">
    <property type="entry name" value="PROTEIN YCGL"/>
    <property type="match status" value="1"/>
</dbReference>
<dbReference type="Pfam" id="PF05166">
    <property type="entry name" value="YcgL"/>
    <property type="match status" value="1"/>
</dbReference>
<dbReference type="SUPFAM" id="SSF160191">
    <property type="entry name" value="YcgL-like"/>
    <property type="match status" value="1"/>
</dbReference>
<dbReference type="PROSITE" id="PS51648">
    <property type="entry name" value="YCGL"/>
    <property type="match status" value="1"/>
</dbReference>
<accession>P44198</accession>
<proteinExistence type="inferred from homology"/>